<protein>
    <recommendedName>
        <fullName>Torsin-like protein</fullName>
    </recommendedName>
</protein>
<organism>
    <name type="scientific">Drosophila melanogaster</name>
    <name type="common">Fruit fly</name>
    <dbReference type="NCBI Taxonomy" id="7227"/>
    <lineage>
        <taxon>Eukaryota</taxon>
        <taxon>Metazoa</taxon>
        <taxon>Ecdysozoa</taxon>
        <taxon>Arthropoda</taxon>
        <taxon>Hexapoda</taxon>
        <taxon>Insecta</taxon>
        <taxon>Pterygota</taxon>
        <taxon>Neoptera</taxon>
        <taxon>Endopterygota</taxon>
        <taxon>Diptera</taxon>
        <taxon>Brachycera</taxon>
        <taxon>Muscomorpha</taxon>
        <taxon>Ephydroidea</taxon>
        <taxon>Drosophilidae</taxon>
        <taxon>Drosophila</taxon>
        <taxon>Sophophora</taxon>
    </lineage>
</organism>
<accession>O77277</accession>
<accession>B4F5H4</accession>
<accession>B4F5H5</accession>
<accession>B4F5H6</accession>
<accession>B4F5I2</accession>
<accession>C0MLF3</accession>
<accession>C0MLF6</accession>
<accession>C0MLG2</accession>
<accession>Q8T037</accession>
<proteinExistence type="evidence at transcript level"/>
<feature type="signal peptide" evidence="2">
    <location>
        <begin position="1"/>
        <end position="24"/>
    </location>
</feature>
<feature type="chain" id="PRO_0000005512" description="Torsin-like protein">
    <location>
        <begin position="25"/>
        <end position="340"/>
    </location>
</feature>
<feature type="binding site" evidence="2">
    <location>
        <begin position="108"/>
        <end position="115"/>
    </location>
    <ligand>
        <name>ATP</name>
        <dbReference type="ChEBI" id="CHEBI:30616"/>
    </ligand>
</feature>
<feature type="glycosylation site" description="N-linked (GlcNAc...) asparagine" evidence="2">
    <location>
        <position position="96"/>
    </location>
</feature>
<feature type="glycosylation site" description="N-linked (GlcNAc...) asparagine" evidence="2">
    <location>
        <position position="311"/>
    </location>
</feature>
<feature type="sequence variant" description="In strain: ZBMEL384." evidence="3">
    <original>V</original>
    <variation>G</variation>
    <location>
        <position position="14"/>
    </location>
</feature>
<feature type="sequence variant" description="In strain: MEL14 and ZBMEL384." evidence="3 4">
    <original>I</original>
    <variation>M</variation>
    <location>
        <position position="30"/>
    </location>
</feature>
<feature type="sequence variant" description="In strain: ZBMEL82, ZBMEL95, ZBMEL131, ZBMEL145, ZBMEL157, ZBMEL229, ZBMEL377 and ZBMEL398." evidence="3">
    <original>A</original>
    <variation>S</variation>
    <location>
        <position position="118"/>
    </location>
</feature>
<feature type="sequence variant" description="In strain: ZBMEL82, ZBMEL95, ZBMEL131, ZBMEL145, ZBMEL157, ZBMEL229, ZBMEL377 and ZBMEL398." evidence="3">
    <original>M</original>
    <variation>L</variation>
    <location>
        <position position="125"/>
    </location>
</feature>
<feature type="sequence variant" description="In strain: MEL14, ZBMEL82, ZBMEL95, ZBMEL131, ZBMEL145, ZBMEL157, ZBMEL229, ZBMEL377 and ZBMEL398." evidence="3 4">
    <original>Y</original>
    <variation>F</variation>
    <location>
        <position position="138"/>
    </location>
</feature>
<feature type="sequence variant" description="In strain: MEL20." evidence="4">
    <original>N</original>
    <variation>K</variation>
    <location>
        <position position="152"/>
    </location>
</feature>
<feature type="sequence variant" description="In strain: MEL11 and MEL13." evidence="4">
    <original>D</original>
    <variation>N</variation>
    <location>
        <position position="163"/>
    </location>
</feature>
<feature type="sequence variant" description="In strain: MEL14, ZBMEL82, ZBMEL131, ZBMEL145, ZBMEL157, ZBMEL229, ZBMEL377, ZBMEL384 and ZBMEL398." evidence="3 4">
    <original>S</original>
    <variation>N</variation>
    <location>
        <position position="226"/>
    </location>
</feature>
<reference key="1">
    <citation type="journal article" date="2008" name="Mol. Biol. Evol.">
        <title>Effects of X-linkage and sex-biased gene expression on the rate of adaptive protein evolution in Drosophila.</title>
        <authorList>
            <person name="Baines J.F."/>
            <person name="Sawyer S.A."/>
            <person name="Hartl D.L."/>
            <person name="Parsch J."/>
        </authorList>
    </citation>
    <scope>NUCLEOTIDE SEQUENCE [GENOMIC DNA]</scope>
    <scope>VARIANTS GLY-14; MET-30; SER-118; LEU-125; PHE-138 AND ASN-226</scope>
    <source>
        <strain>ZBMEL131</strain>
        <strain>ZBMEL145</strain>
        <strain>ZBMEL157</strain>
        <strain>ZBMEL229</strain>
        <strain>ZBMEL377</strain>
        <strain>ZBMEL384</strain>
        <strain>ZBMEL398</strain>
        <strain>ZBMEL82</strain>
        <strain>ZBMEL84</strain>
        <strain>ZBMEL95</strain>
    </source>
</reference>
<reference key="2">
    <citation type="journal article" date="2009" name="Mol. Biol. Evol.">
        <title>The influence of demography and weak selection on the McDonald-Kreitman test: an empirical study in Drosophila.</title>
        <authorList>
            <person name="Parsch J."/>
            <person name="Zhang Z."/>
            <person name="Baines J.F."/>
        </authorList>
    </citation>
    <scope>NUCLEOTIDE SEQUENCE [GENOMIC DNA]</scope>
    <scope>VARIANTS MET-30; PHE-138; LYS-152; ASN-163 AND ASN-226</scope>
    <source>
        <strain>MEL01</strain>
        <strain>MEL02</strain>
        <strain>MEL11</strain>
        <strain>MEL12</strain>
        <strain>MEL13</strain>
        <strain>MEL14</strain>
        <strain>MEL15</strain>
        <strain>MEL16</strain>
        <strain>MEL17</strain>
        <strain>MEL18</strain>
        <strain>MEL19</strain>
        <strain>MEL20</strain>
    </source>
</reference>
<reference key="3">
    <citation type="submission" date="2000-02" db="EMBL/GenBank/DDBJ databases">
        <title>A Drosophila homolog of human torsinA, gene responsible for primary torsion dystornia.</title>
        <authorList>
            <person name="Chou J."/>
            <person name="Gusella J.F."/>
        </authorList>
    </citation>
    <scope>NUCLEOTIDE SEQUENCE [MRNA]</scope>
</reference>
<reference key="4">
    <citation type="journal article" date="2000" name="Science">
        <title>The genome sequence of Drosophila melanogaster.</title>
        <authorList>
            <person name="Adams M.D."/>
            <person name="Celniker S.E."/>
            <person name="Holt R.A."/>
            <person name="Evans C.A."/>
            <person name="Gocayne J.D."/>
            <person name="Amanatides P.G."/>
            <person name="Scherer S.E."/>
            <person name="Li P.W."/>
            <person name="Hoskins R.A."/>
            <person name="Galle R.F."/>
            <person name="George R.A."/>
            <person name="Lewis S.E."/>
            <person name="Richards S."/>
            <person name="Ashburner M."/>
            <person name="Henderson S.N."/>
            <person name="Sutton G.G."/>
            <person name="Wortman J.R."/>
            <person name="Yandell M.D."/>
            <person name="Zhang Q."/>
            <person name="Chen L.X."/>
            <person name="Brandon R.C."/>
            <person name="Rogers Y.-H.C."/>
            <person name="Blazej R.G."/>
            <person name="Champe M."/>
            <person name="Pfeiffer B.D."/>
            <person name="Wan K.H."/>
            <person name="Doyle C."/>
            <person name="Baxter E.G."/>
            <person name="Helt G."/>
            <person name="Nelson C.R."/>
            <person name="Miklos G.L.G."/>
            <person name="Abril J.F."/>
            <person name="Agbayani A."/>
            <person name="An H.-J."/>
            <person name="Andrews-Pfannkoch C."/>
            <person name="Baldwin D."/>
            <person name="Ballew R.M."/>
            <person name="Basu A."/>
            <person name="Baxendale J."/>
            <person name="Bayraktaroglu L."/>
            <person name="Beasley E.M."/>
            <person name="Beeson K.Y."/>
            <person name="Benos P.V."/>
            <person name="Berman B.P."/>
            <person name="Bhandari D."/>
            <person name="Bolshakov S."/>
            <person name="Borkova D."/>
            <person name="Botchan M.R."/>
            <person name="Bouck J."/>
            <person name="Brokstein P."/>
            <person name="Brottier P."/>
            <person name="Burtis K.C."/>
            <person name="Busam D.A."/>
            <person name="Butler H."/>
            <person name="Cadieu E."/>
            <person name="Center A."/>
            <person name="Chandra I."/>
            <person name="Cherry J.M."/>
            <person name="Cawley S."/>
            <person name="Dahlke C."/>
            <person name="Davenport L.B."/>
            <person name="Davies P."/>
            <person name="de Pablos B."/>
            <person name="Delcher A."/>
            <person name="Deng Z."/>
            <person name="Mays A.D."/>
            <person name="Dew I."/>
            <person name="Dietz S.M."/>
            <person name="Dodson K."/>
            <person name="Doup L.E."/>
            <person name="Downes M."/>
            <person name="Dugan-Rocha S."/>
            <person name="Dunkov B.C."/>
            <person name="Dunn P."/>
            <person name="Durbin K.J."/>
            <person name="Evangelista C.C."/>
            <person name="Ferraz C."/>
            <person name="Ferriera S."/>
            <person name="Fleischmann W."/>
            <person name="Fosler C."/>
            <person name="Gabrielian A.E."/>
            <person name="Garg N.S."/>
            <person name="Gelbart W.M."/>
            <person name="Glasser K."/>
            <person name="Glodek A."/>
            <person name="Gong F."/>
            <person name="Gorrell J.H."/>
            <person name="Gu Z."/>
            <person name="Guan P."/>
            <person name="Harris M."/>
            <person name="Harris N.L."/>
            <person name="Harvey D.A."/>
            <person name="Heiman T.J."/>
            <person name="Hernandez J.R."/>
            <person name="Houck J."/>
            <person name="Hostin D."/>
            <person name="Houston K.A."/>
            <person name="Howland T.J."/>
            <person name="Wei M.-H."/>
            <person name="Ibegwam C."/>
            <person name="Jalali M."/>
            <person name="Kalush F."/>
            <person name="Karpen G.H."/>
            <person name="Ke Z."/>
            <person name="Kennison J.A."/>
            <person name="Ketchum K.A."/>
            <person name="Kimmel B.E."/>
            <person name="Kodira C.D."/>
            <person name="Kraft C.L."/>
            <person name="Kravitz S."/>
            <person name="Kulp D."/>
            <person name="Lai Z."/>
            <person name="Lasko P."/>
            <person name="Lei Y."/>
            <person name="Levitsky A.A."/>
            <person name="Li J.H."/>
            <person name="Li Z."/>
            <person name="Liang Y."/>
            <person name="Lin X."/>
            <person name="Liu X."/>
            <person name="Mattei B."/>
            <person name="McIntosh T.C."/>
            <person name="McLeod M.P."/>
            <person name="McPherson D."/>
            <person name="Merkulov G."/>
            <person name="Milshina N.V."/>
            <person name="Mobarry C."/>
            <person name="Morris J."/>
            <person name="Moshrefi A."/>
            <person name="Mount S.M."/>
            <person name="Moy M."/>
            <person name="Murphy B."/>
            <person name="Murphy L."/>
            <person name="Muzny D.M."/>
            <person name="Nelson D.L."/>
            <person name="Nelson D.R."/>
            <person name="Nelson K.A."/>
            <person name="Nixon K."/>
            <person name="Nusskern D.R."/>
            <person name="Pacleb J.M."/>
            <person name="Palazzolo M."/>
            <person name="Pittman G.S."/>
            <person name="Pan S."/>
            <person name="Pollard J."/>
            <person name="Puri V."/>
            <person name="Reese M.G."/>
            <person name="Reinert K."/>
            <person name="Remington K."/>
            <person name="Saunders R.D.C."/>
            <person name="Scheeler F."/>
            <person name="Shen H."/>
            <person name="Shue B.C."/>
            <person name="Siden-Kiamos I."/>
            <person name="Simpson M."/>
            <person name="Skupski M.P."/>
            <person name="Smith T.J."/>
            <person name="Spier E."/>
            <person name="Spradling A.C."/>
            <person name="Stapleton M."/>
            <person name="Strong R."/>
            <person name="Sun E."/>
            <person name="Svirskas R."/>
            <person name="Tector C."/>
            <person name="Turner R."/>
            <person name="Venter E."/>
            <person name="Wang A.H."/>
            <person name="Wang X."/>
            <person name="Wang Z.-Y."/>
            <person name="Wassarman D.A."/>
            <person name="Weinstock G.M."/>
            <person name="Weissenbach J."/>
            <person name="Williams S.M."/>
            <person name="Woodage T."/>
            <person name="Worley K.C."/>
            <person name="Wu D."/>
            <person name="Yang S."/>
            <person name="Yao Q.A."/>
            <person name="Ye J."/>
            <person name="Yeh R.-F."/>
            <person name="Zaveri J.S."/>
            <person name="Zhan M."/>
            <person name="Zhang G."/>
            <person name="Zhao Q."/>
            <person name="Zheng L."/>
            <person name="Zheng X.H."/>
            <person name="Zhong F.N."/>
            <person name="Zhong W."/>
            <person name="Zhou X."/>
            <person name="Zhu S.C."/>
            <person name="Zhu X."/>
            <person name="Smith H.O."/>
            <person name="Gibbs R.A."/>
            <person name="Myers E.W."/>
            <person name="Rubin G.M."/>
            <person name="Venter J.C."/>
        </authorList>
    </citation>
    <scope>NUCLEOTIDE SEQUENCE [LARGE SCALE GENOMIC DNA]</scope>
    <source>
        <strain>Berkeley</strain>
    </source>
</reference>
<reference key="5">
    <citation type="journal article" date="2002" name="Genome Biol.">
        <title>Annotation of the Drosophila melanogaster euchromatic genome: a systematic review.</title>
        <authorList>
            <person name="Misra S."/>
            <person name="Crosby M.A."/>
            <person name="Mungall C.J."/>
            <person name="Matthews B.B."/>
            <person name="Campbell K.S."/>
            <person name="Hradecky P."/>
            <person name="Huang Y."/>
            <person name="Kaminker J.S."/>
            <person name="Millburn G.H."/>
            <person name="Prochnik S.E."/>
            <person name="Smith C.D."/>
            <person name="Tupy J.L."/>
            <person name="Whitfield E.J."/>
            <person name="Bayraktaroglu L."/>
            <person name="Berman B.P."/>
            <person name="Bettencourt B.R."/>
            <person name="Celniker S.E."/>
            <person name="de Grey A.D.N.J."/>
            <person name="Drysdale R.A."/>
            <person name="Harris N.L."/>
            <person name="Richter J."/>
            <person name="Russo S."/>
            <person name="Schroeder A.J."/>
            <person name="Shu S.Q."/>
            <person name="Stapleton M."/>
            <person name="Yamada C."/>
            <person name="Ashburner M."/>
            <person name="Gelbart W.M."/>
            <person name="Rubin G.M."/>
            <person name="Lewis S.E."/>
        </authorList>
    </citation>
    <scope>GENOME REANNOTATION</scope>
    <source>
        <strain>Berkeley</strain>
    </source>
</reference>
<reference key="6">
    <citation type="journal article" date="2000" name="Science">
        <title>From sequence to chromosome: the tip of the X chromosome of D. melanogaster.</title>
        <authorList>
            <person name="Benos P.V."/>
            <person name="Gatt M.K."/>
            <person name="Ashburner M."/>
            <person name="Murphy L."/>
            <person name="Harris D."/>
            <person name="Barrell B.G."/>
            <person name="Ferraz C."/>
            <person name="Vidal S."/>
            <person name="Brun C."/>
            <person name="Demailles J."/>
            <person name="Cadieu E."/>
            <person name="Dreano S."/>
            <person name="Gloux S."/>
            <person name="Lelaure V."/>
            <person name="Mottier S."/>
            <person name="Galibert F."/>
            <person name="Borkova D."/>
            <person name="Minana B."/>
            <person name="Kafatos F.C."/>
            <person name="Louis C."/>
            <person name="Siden-Kiamos I."/>
            <person name="Bolshakov S."/>
            <person name="Papagiannakis G."/>
            <person name="Spanos L."/>
            <person name="Cox S."/>
            <person name="Madueno E."/>
            <person name="de Pablos B."/>
            <person name="Modolell J."/>
            <person name="Peter A."/>
            <person name="Schoettler P."/>
            <person name="Werner M."/>
            <person name="Mourkioti F."/>
            <person name="Beinert N."/>
            <person name="Dowe G."/>
            <person name="Schaefer U."/>
            <person name="Jaeckle H."/>
            <person name="Bucheton A."/>
            <person name="Callister D.M."/>
            <person name="Campbell L.A."/>
            <person name="Darlamitsou A."/>
            <person name="Henderson N.S."/>
            <person name="McMillan P.J."/>
            <person name="Salles C."/>
            <person name="Tait E.A."/>
            <person name="Valenti P."/>
            <person name="Saunders R.D.C."/>
            <person name="Glover D.M."/>
        </authorList>
    </citation>
    <scope>NUCLEOTIDE SEQUENCE [LARGE SCALE GENOMIC DNA]</scope>
    <source>
        <strain>Oregon-R</strain>
    </source>
</reference>
<reference key="7">
    <citation type="journal article" date="2002" name="Genome Biol.">
        <title>A Drosophila full-length cDNA resource.</title>
        <authorList>
            <person name="Stapleton M."/>
            <person name="Carlson J.W."/>
            <person name="Brokstein P."/>
            <person name="Yu C."/>
            <person name="Champe M."/>
            <person name="George R.A."/>
            <person name="Guarin H."/>
            <person name="Kronmiller B."/>
            <person name="Pacleb J.M."/>
            <person name="Park S."/>
            <person name="Wan K.H."/>
            <person name="Rubin G.M."/>
            <person name="Celniker S.E."/>
        </authorList>
    </citation>
    <scope>NUCLEOTIDE SEQUENCE [LARGE SCALE MRNA]</scope>
    <source>
        <strain>Berkeley</strain>
        <tissue>Embryo</tissue>
    </source>
</reference>
<reference key="8">
    <citation type="submission" date="2003-02" db="EMBL/GenBank/DDBJ databases">
        <authorList>
            <person name="Stapleton M."/>
            <person name="Brokstein P."/>
            <person name="Hong L."/>
            <person name="Agbayani A."/>
            <person name="Carlson J.W."/>
            <person name="Champe M."/>
            <person name="Chavez C."/>
            <person name="Dorsett V."/>
            <person name="Dresnek D."/>
            <person name="Farfan D."/>
            <person name="Frise E."/>
            <person name="George R.A."/>
            <person name="Gonzalez M."/>
            <person name="Guarin H."/>
            <person name="Kronmiller B."/>
            <person name="Li P.W."/>
            <person name="Liao G."/>
            <person name="Miranda A."/>
            <person name="Mungall C.J."/>
            <person name="Nunoo J."/>
            <person name="Pacleb J.M."/>
            <person name="Paragas V."/>
            <person name="Park S."/>
            <person name="Patel S."/>
            <person name="Phouanenavong S."/>
            <person name="Wan K.H."/>
            <person name="Yu C."/>
            <person name="Lewis S.E."/>
            <person name="Rubin G.M."/>
            <person name="Celniker S.E."/>
        </authorList>
    </citation>
    <scope>NUCLEOTIDE SEQUENCE [LARGE SCALE MRNA]</scope>
    <source>
        <strain>Berkeley</strain>
        <tissue>Larva</tissue>
        <tissue>Pupae</tissue>
    </source>
</reference>
<comment type="function">
    <text evidence="1">May serve as a molecular chaperone assisting in the proper folding of secreted and/or membrane proteins.</text>
</comment>
<comment type="subcellular location">
    <subcellularLocation>
        <location evidence="1">Endoplasmic reticulum lumen</location>
    </subcellularLocation>
</comment>
<comment type="similarity">
    <text evidence="5">Belongs to the ClpA/ClpB family. Torsin subfamily.</text>
</comment>
<comment type="sequence caution" evidence="5">
    <conflict type="erroneous initiation">
        <sequence resource="EMBL-CDS" id="AAF60321"/>
    </conflict>
    <text>Truncated N-terminus.</text>
</comment>
<comment type="sequence caution" evidence="5">
    <conflict type="erroneous initiation">
        <sequence resource="EMBL-CDS" id="AAL39737"/>
    </conflict>
    <text>Extended N-terminus.</text>
</comment>
<comment type="sequence caution" evidence="5">
    <conflict type="erroneous initiation">
        <sequence resource="EMBL-CDS" id="CAA21132"/>
    </conflict>
    <text>Truncated N-terminus.</text>
</comment>
<keyword id="KW-0067">ATP-binding</keyword>
<keyword id="KW-0143">Chaperone</keyword>
<keyword id="KW-0256">Endoplasmic reticulum</keyword>
<keyword id="KW-0325">Glycoprotein</keyword>
<keyword id="KW-0547">Nucleotide-binding</keyword>
<keyword id="KW-1185">Reference proteome</keyword>
<keyword id="KW-0732">Signal</keyword>
<name>TORS_DROME</name>
<gene>
    <name type="primary">Torsin</name>
    <name type="synonym">torp4a</name>
    <name type="ORF">CG3024</name>
</gene>
<dbReference type="EMBL" id="AM999060">
    <property type="protein sequence ID" value="CAQ53422.1"/>
    <property type="molecule type" value="Genomic_DNA"/>
</dbReference>
<dbReference type="EMBL" id="AM999061">
    <property type="protein sequence ID" value="CAQ53423.1"/>
    <property type="molecule type" value="Genomic_DNA"/>
</dbReference>
<dbReference type="EMBL" id="AM999062">
    <property type="protein sequence ID" value="CAQ53424.1"/>
    <property type="molecule type" value="Genomic_DNA"/>
</dbReference>
<dbReference type="EMBL" id="AM999063">
    <property type="protein sequence ID" value="CAQ53425.1"/>
    <property type="molecule type" value="Genomic_DNA"/>
</dbReference>
<dbReference type="EMBL" id="AM999064">
    <property type="protein sequence ID" value="CAQ53426.1"/>
    <property type="molecule type" value="Genomic_DNA"/>
</dbReference>
<dbReference type="EMBL" id="AM999065">
    <property type="protein sequence ID" value="CAQ53427.1"/>
    <property type="molecule type" value="Genomic_DNA"/>
</dbReference>
<dbReference type="EMBL" id="AM999066">
    <property type="protein sequence ID" value="CAQ53428.1"/>
    <property type="molecule type" value="Genomic_DNA"/>
</dbReference>
<dbReference type="EMBL" id="AM999067">
    <property type="protein sequence ID" value="CAQ53429.1"/>
    <property type="molecule type" value="Genomic_DNA"/>
</dbReference>
<dbReference type="EMBL" id="AM999068">
    <property type="protein sequence ID" value="CAQ53430.1"/>
    <property type="molecule type" value="Genomic_DNA"/>
</dbReference>
<dbReference type="EMBL" id="AM999069">
    <property type="protein sequence ID" value="CAQ53431.1"/>
    <property type="molecule type" value="Genomic_DNA"/>
</dbReference>
<dbReference type="EMBL" id="FM246173">
    <property type="protein sequence ID" value="CAR94099.1"/>
    <property type="molecule type" value="Genomic_DNA"/>
</dbReference>
<dbReference type="EMBL" id="FM246174">
    <property type="protein sequence ID" value="CAR94100.1"/>
    <property type="molecule type" value="Genomic_DNA"/>
</dbReference>
<dbReference type="EMBL" id="FM246175">
    <property type="protein sequence ID" value="CAR94101.1"/>
    <property type="molecule type" value="Genomic_DNA"/>
</dbReference>
<dbReference type="EMBL" id="FM246176">
    <property type="protein sequence ID" value="CAR94102.1"/>
    <property type="molecule type" value="Genomic_DNA"/>
</dbReference>
<dbReference type="EMBL" id="FM246177">
    <property type="protein sequence ID" value="CAR94103.1"/>
    <property type="molecule type" value="Genomic_DNA"/>
</dbReference>
<dbReference type="EMBL" id="FM246178">
    <property type="protein sequence ID" value="CAR94104.1"/>
    <property type="molecule type" value="Genomic_DNA"/>
</dbReference>
<dbReference type="EMBL" id="FM246179">
    <property type="protein sequence ID" value="CAR94105.1"/>
    <property type="molecule type" value="Genomic_DNA"/>
</dbReference>
<dbReference type="EMBL" id="FM246180">
    <property type="protein sequence ID" value="CAR94106.1"/>
    <property type="molecule type" value="Genomic_DNA"/>
</dbReference>
<dbReference type="EMBL" id="FM246181">
    <property type="protein sequence ID" value="CAR94107.1"/>
    <property type="molecule type" value="Genomic_DNA"/>
</dbReference>
<dbReference type="EMBL" id="FM246182">
    <property type="protein sequence ID" value="CAR94108.1"/>
    <property type="molecule type" value="Genomic_DNA"/>
</dbReference>
<dbReference type="EMBL" id="FM246183">
    <property type="protein sequence ID" value="CAR94109.1"/>
    <property type="molecule type" value="Genomic_DNA"/>
</dbReference>
<dbReference type="EMBL" id="FM246184">
    <property type="protein sequence ID" value="CAR94110.1"/>
    <property type="molecule type" value="Genomic_DNA"/>
</dbReference>
<dbReference type="EMBL" id="AF236156">
    <property type="protein sequence ID" value="AAF60321.1"/>
    <property type="status" value="ALT_INIT"/>
    <property type="molecule type" value="mRNA"/>
</dbReference>
<dbReference type="EMBL" id="AE014298">
    <property type="protein sequence ID" value="AAF45969.2"/>
    <property type="molecule type" value="Genomic_DNA"/>
</dbReference>
<dbReference type="EMBL" id="AL031766">
    <property type="protein sequence ID" value="CAA21132.1"/>
    <property type="status" value="ALT_INIT"/>
    <property type="molecule type" value="Genomic_DNA"/>
</dbReference>
<dbReference type="EMBL" id="AY069592">
    <property type="protein sequence ID" value="AAL39737.2"/>
    <property type="status" value="ALT_INIT"/>
    <property type="molecule type" value="mRNA"/>
</dbReference>
<dbReference type="EMBL" id="BT003553">
    <property type="protein sequence ID" value="AAO39557.1"/>
    <property type="molecule type" value="mRNA"/>
</dbReference>
<dbReference type="RefSeq" id="NP_001284866.1">
    <property type="nucleotide sequence ID" value="NM_001297937.1"/>
</dbReference>
<dbReference type="RefSeq" id="NP_572178.1">
    <property type="nucleotide sequence ID" value="NM_131950.4"/>
</dbReference>
<dbReference type="SMR" id="O77277"/>
<dbReference type="BioGRID" id="57916">
    <property type="interactions" value="6"/>
</dbReference>
<dbReference type="FunCoup" id="O77277">
    <property type="interactions" value="1142"/>
</dbReference>
<dbReference type="IntAct" id="O77277">
    <property type="interactions" value="5"/>
</dbReference>
<dbReference type="STRING" id="7227.FBpp0311758"/>
<dbReference type="GlyCosmos" id="O77277">
    <property type="glycosylation" value="2 sites, No reported glycans"/>
</dbReference>
<dbReference type="GlyGen" id="O77277">
    <property type="glycosylation" value="2 sites"/>
</dbReference>
<dbReference type="PaxDb" id="7227-FBpp0070658"/>
<dbReference type="DNASU" id="31399"/>
<dbReference type="EnsemblMetazoa" id="FBtr0070690">
    <property type="protein sequence ID" value="FBpp0070658"/>
    <property type="gene ID" value="FBgn0025615"/>
</dbReference>
<dbReference type="EnsemblMetazoa" id="FBtr0345715">
    <property type="protein sequence ID" value="FBpp0311758"/>
    <property type="gene ID" value="FBgn0025615"/>
</dbReference>
<dbReference type="GeneID" id="31399"/>
<dbReference type="KEGG" id="dme:Dmel_CG3024"/>
<dbReference type="UCSC" id="CG3024-RA">
    <property type="organism name" value="d. melanogaster"/>
</dbReference>
<dbReference type="AGR" id="FB:FBgn0025615"/>
<dbReference type="CTD" id="31399"/>
<dbReference type="FlyBase" id="FBgn0025615">
    <property type="gene designation" value="Torsin"/>
</dbReference>
<dbReference type="VEuPathDB" id="VectorBase:FBgn0025615"/>
<dbReference type="eggNOG" id="KOG2170">
    <property type="taxonomic scope" value="Eukaryota"/>
</dbReference>
<dbReference type="GeneTree" id="ENSGT00950000182888"/>
<dbReference type="HOGENOM" id="CLU_053537_0_0_1"/>
<dbReference type="InParanoid" id="O77277"/>
<dbReference type="OMA" id="ECCDDRS"/>
<dbReference type="OrthoDB" id="19623at2759"/>
<dbReference type="PhylomeDB" id="O77277"/>
<dbReference type="Reactome" id="R-DME-114608">
    <property type="pathway name" value="Platelet degranulation"/>
</dbReference>
<dbReference type="Reactome" id="R-DME-8856825">
    <property type="pathway name" value="Cargo recognition for clathrin-mediated endocytosis"/>
</dbReference>
<dbReference type="BioGRID-ORCS" id="31399">
    <property type="hits" value="2 hits in 3 CRISPR screens"/>
</dbReference>
<dbReference type="GenomeRNAi" id="31399"/>
<dbReference type="PRO" id="PR:O77277"/>
<dbReference type="Proteomes" id="UP000000803">
    <property type="component" value="Chromosome X"/>
</dbReference>
<dbReference type="Bgee" id="FBgn0025615">
    <property type="expression patterns" value="Expressed in adult middle midgut class II enteroendocrine cell in adult midgut (Drosophila) and 131 other cell types or tissues"/>
</dbReference>
<dbReference type="ExpressionAtlas" id="O77277">
    <property type="expression patterns" value="baseline and differential"/>
</dbReference>
<dbReference type="GO" id="GO:0005783">
    <property type="term" value="C:endoplasmic reticulum"/>
    <property type="evidence" value="ECO:0000314"/>
    <property type="project" value="FlyBase"/>
</dbReference>
<dbReference type="GO" id="GO:0005788">
    <property type="term" value="C:endoplasmic reticulum lumen"/>
    <property type="evidence" value="ECO:0007669"/>
    <property type="project" value="UniProtKB-SubCell"/>
</dbReference>
<dbReference type="GO" id="GO:0005635">
    <property type="term" value="C:nuclear envelope"/>
    <property type="evidence" value="ECO:0000314"/>
    <property type="project" value="FlyBase"/>
</dbReference>
<dbReference type="GO" id="GO:0106083">
    <property type="term" value="C:nuclear membrane protein complex"/>
    <property type="evidence" value="ECO:0000316"/>
    <property type="project" value="FlyBase"/>
</dbReference>
<dbReference type="GO" id="GO:0005524">
    <property type="term" value="F:ATP binding"/>
    <property type="evidence" value="ECO:0000255"/>
    <property type="project" value="FlyBase"/>
</dbReference>
<dbReference type="GO" id="GO:0016887">
    <property type="term" value="F:ATP hydrolysis activity"/>
    <property type="evidence" value="ECO:0000250"/>
    <property type="project" value="FlyBase"/>
</dbReference>
<dbReference type="GO" id="GO:0071218">
    <property type="term" value="P:cellular response to misfolded protein"/>
    <property type="evidence" value="ECO:0000318"/>
    <property type="project" value="GO_Central"/>
</dbReference>
<dbReference type="GO" id="GO:0051085">
    <property type="term" value="P:chaperone cofactor-dependent protein refolding"/>
    <property type="evidence" value="ECO:0007669"/>
    <property type="project" value="InterPro"/>
</dbReference>
<dbReference type="GO" id="GO:0008057">
    <property type="term" value="P:eye pigment granule organization"/>
    <property type="evidence" value="ECO:0000315"/>
    <property type="project" value="FlyBase"/>
</dbReference>
<dbReference type="GO" id="GO:0007504">
    <property type="term" value="P:larval fat body development"/>
    <property type="evidence" value="ECO:0000315"/>
    <property type="project" value="FlyBase"/>
</dbReference>
<dbReference type="GO" id="GO:0006629">
    <property type="term" value="P:lipid metabolic process"/>
    <property type="evidence" value="ECO:0000315"/>
    <property type="project" value="FlyBase"/>
</dbReference>
<dbReference type="GO" id="GO:0046467">
    <property type="term" value="P:membrane lipid biosynthetic process"/>
    <property type="evidence" value="ECO:0000315"/>
    <property type="project" value="FlyBase"/>
</dbReference>
<dbReference type="GO" id="GO:0070050">
    <property type="term" value="P:neuron cellular homeostasis"/>
    <property type="evidence" value="ECO:0000315"/>
    <property type="project" value="FlyBase"/>
</dbReference>
<dbReference type="GO" id="GO:0140591">
    <property type="term" value="P:nuclear envelope budding"/>
    <property type="evidence" value="ECO:0000315"/>
    <property type="project" value="FlyBase"/>
</dbReference>
<dbReference type="GO" id="GO:0030307">
    <property type="term" value="P:positive regulation of cell growth"/>
    <property type="evidence" value="ECO:0000315"/>
    <property type="project" value="FlyBase"/>
</dbReference>
<dbReference type="GO" id="GO:0042053">
    <property type="term" value="P:regulation of dopamine metabolic process"/>
    <property type="evidence" value="ECO:0000315"/>
    <property type="project" value="FlyBase"/>
</dbReference>
<dbReference type="GO" id="GO:0010883">
    <property type="term" value="P:regulation of lipid storage"/>
    <property type="evidence" value="ECO:0000315"/>
    <property type="project" value="FlyBase"/>
</dbReference>
<dbReference type="GO" id="GO:0070328">
    <property type="term" value="P:triglyceride homeostasis"/>
    <property type="evidence" value="ECO:0000315"/>
    <property type="project" value="FlyBase"/>
</dbReference>
<dbReference type="GO" id="GO:0099050">
    <property type="term" value="P:vesicle scission"/>
    <property type="evidence" value="ECO:0000315"/>
    <property type="project" value="FlyBase"/>
</dbReference>
<dbReference type="FunFam" id="3.40.50.300:FF:004287">
    <property type="entry name" value="AGAP009547-PA"/>
    <property type="match status" value="1"/>
</dbReference>
<dbReference type="Gene3D" id="3.40.50.300">
    <property type="entry name" value="P-loop containing nucleotide triphosphate hydrolases"/>
    <property type="match status" value="1"/>
</dbReference>
<dbReference type="InterPro" id="IPR027417">
    <property type="entry name" value="P-loop_NTPase"/>
</dbReference>
<dbReference type="InterPro" id="IPR010448">
    <property type="entry name" value="Torsin"/>
</dbReference>
<dbReference type="InterPro" id="IPR017378">
    <property type="entry name" value="Torsin_1/2"/>
</dbReference>
<dbReference type="PANTHER" id="PTHR10760:SF2">
    <property type="entry name" value="LD13476P-RELATED"/>
    <property type="match status" value="1"/>
</dbReference>
<dbReference type="PANTHER" id="PTHR10760">
    <property type="entry name" value="TORSIN"/>
    <property type="match status" value="1"/>
</dbReference>
<dbReference type="Pfam" id="PF06309">
    <property type="entry name" value="Torsin"/>
    <property type="match status" value="1"/>
</dbReference>
<dbReference type="PIRSF" id="PIRSF038079">
    <property type="entry name" value="Torsin_2A"/>
    <property type="match status" value="1"/>
</dbReference>
<dbReference type="SUPFAM" id="SSF52540">
    <property type="entry name" value="P-loop containing nucleoside triphosphate hydrolases"/>
    <property type="match status" value="1"/>
</dbReference>
<sequence length="340" mass="38170">MMSFPRMLSLCLSVLVILPLPLQSVDPLTIGAVGAVALGAYFKEHTYCRFAECCDDRNIPARIDELERSLERTLIGQHIVRQHIVPALKAHIASGNKSRKPLVISFHGQPGTGKNFVAEQIADAMYLKGSRSNYVTKYLGQADFPKESEVSNYRVKINNAVRDTLRSCPRSLFIFDEVDKMPSGVFDQLTSLVDYNAFVDGTDNTKAIFIFLSNTAGSHIASHLGSVMKNGRLREDTRLSDFEPLLRKAAYNMDGGMKKTTMIESHVIDHFIPFLPMEKAHVIKCLEAELLRWRRDPKQANNQKIIEDIINSSISYDRTHSLFAISGCKTLEKKVAMAIY</sequence>
<evidence type="ECO:0000250" key="1"/>
<evidence type="ECO:0000255" key="2"/>
<evidence type="ECO:0000269" key="3">
    <source>
    </source>
</evidence>
<evidence type="ECO:0000269" key="4">
    <source>
    </source>
</evidence>
<evidence type="ECO:0000305" key="5"/>